<accession>Q5PGP5</accession>
<protein>
    <recommendedName>
        <fullName evidence="1">Glutathione transport system permease protein GsiC</fullName>
    </recommendedName>
</protein>
<reference key="1">
    <citation type="journal article" date="2004" name="Nat. Genet.">
        <title>Comparison of genome degradation in Paratyphi A and Typhi, human-restricted serovars of Salmonella enterica that cause typhoid.</title>
        <authorList>
            <person name="McClelland M."/>
            <person name="Sanderson K.E."/>
            <person name="Clifton S.W."/>
            <person name="Latreille P."/>
            <person name="Porwollik S."/>
            <person name="Sabo A."/>
            <person name="Meyer R."/>
            <person name="Bieri T."/>
            <person name="Ozersky P."/>
            <person name="McLellan M."/>
            <person name="Harkins C.R."/>
            <person name="Wang C."/>
            <person name="Nguyen C."/>
            <person name="Berghoff A."/>
            <person name="Elliott G."/>
            <person name="Kohlberg S."/>
            <person name="Strong C."/>
            <person name="Du F."/>
            <person name="Carter J."/>
            <person name="Kremizki C."/>
            <person name="Layman D."/>
            <person name="Leonard S."/>
            <person name="Sun H."/>
            <person name="Fulton L."/>
            <person name="Nash W."/>
            <person name="Miner T."/>
            <person name="Minx P."/>
            <person name="Delehaunty K."/>
            <person name="Fronick C."/>
            <person name="Magrini V."/>
            <person name="Nhan M."/>
            <person name="Warren W."/>
            <person name="Florea L."/>
            <person name="Spieth J."/>
            <person name="Wilson R.K."/>
        </authorList>
    </citation>
    <scope>NUCLEOTIDE SEQUENCE [LARGE SCALE GENOMIC DNA]</scope>
    <source>
        <strain>ATCC 9150 / SARB42</strain>
    </source>
</reference>
<sequence length="306" mass="33994">MLNYVLKRLLGLIPTLLIVAVLVFLFVHLLPGDPARLIAGPEADAQVIALVRQQLGLDQPLHVQFWRYITHVLQGDFGTSMVSRRPVSEEIASRFLPTLWLTITSMIWAVLFGMAIGIAAAVWRNRWPDRLGMTLAVTGISFPAFALGMLLMQIFSVDLGWLPTVGADSWQHYILPSLTLGAAVASVMARFTRSSFVDVLSEDYMRTARAKGVSETWVVLKHGLRNAMIPVVTMMGLQFGFLLGGSIVVEKVFNWPGLGRLLVDSVDMRDYPVIQAEVLLFSLEFILINLVVDVLYAAINPAIRYK</sequence>
<organism>
    <name type="scientific">Salmonella paratyphi A (strain ATCC 9150 / SARB42)</name>
    <dbReference type="NCBI Taxonomy" id="295319"/>
    <lineage>
        <taxon>Bacteria</taxon>
        <taxon>Pseudomonadati</taxon>
        <taxon>Pseudomonadota</taxon>
        <taxon>Gammaproteobacteria</taxon>
        <taxon>Enterobacterales</taxon>
        <taxon>Enterobacteriaceae</taxon>
        <taxon>Salmonella</taxon>
    </lineage>
</organism>
<evidence type="ECO:0000250" key="1">
    <source>
        <dbReference type="UniProtKB" id="P75798"/>
    </source>
</evidence>
<evidence type="ECO:0000255" key="2"/>
<evidence type="ECO:0000255" key="3">
    <source>
        <dbReference type="PROSITE-ProRule" id="PRU00441"/>
    </source>
</evidence>
<evidence type="ECO:0000305" key="4"/>
<comment type="function">
    <text evidence="1">Part of the ABC transporter complex GsiABCD involved in glutathione import. Probably responsible for the translocation of the substrate across the membrane.</text>
</comment>
<comment type="subunit">
    <text evidence="1">The complex is composed of two ATP-binding proteins (GsiA), two transmembrane proteins (GsiC and GsiD) and a solute-binding protein (GsiB).</text>
</comment>
<comment type="subcellular location">
    <subcellularLocation>
        <location evidence="1">Cell inner membrane</location>
        <topology evidence="2">Multi-pass membrane protein</topology>
    </subcellularLocation>
</comment>
<comment type="similarity">
    <text evidence="4">Belongs to the binding-protein-dependent transport system permease family.</text>
</comment>
<proteinExistence type="inferred from homology"/>
<name>GSIC_SALPA</name>
<keyword id="KW-0997">Cell inner membrane</keyword>
<keyword id="KW-1003">Cell membrane</keyword>
<keyword id="KW-0472">Membrane</keyword>
<keyword id="KW-0812">Transmembrane</keyword>
<keyword id="KW-1133">Transmembrane helix</keyword>
<keyword id="KW-0813">Transport</keyword>
<feature type="chain" id="PRO_0000279994" description="Glutathione transport system permease protein GsiC">
    <location>
        <begin position="1"/>
        <end position="306"/>
    </location>
</feature>
<feature type="topological domain" description="Cytoplasmic" evidence="2">
    <location>
        <begin position="1"/>
        <end position="8"/>
    </location>
</feature>
<feature type="transmembrane region" description="Helical" evidence="3">
    <location>
        <begin position="9"/>
        <end position="29"/>
    </location>
</feature>
<feature type="topological domain" description="Periplasmic" evidence="2">
    <location>
        <begin position="30"/>
        <end position="102"/>
    </location>
</feature>
<feature type="transmembrane region" description="Helical" evidence="3">
    <location>
        <begin position="103"/>
        <end position="123"/>
    </location>
</feature>
<feature type="topological domain" description="Cytoplasmic" evidence="2">
    <location>
        <begin position="124"/>
        <end position="134"/>
    </location>
</feature>
<feature type="transmembrane region" description="Helical" evidence="3">
    <location>
        <begin position="135"/>
        <end position="155"/>
    </location>
</feature>
<feature type="topological domain" description="Periplasmic" evidence="2">
    <location>
        <begin position="156"/>
        <end position="168"/>
    </location>
</feature>
<feature type="transmembrane region" description="Helical" evidence="3">
    <location>
        <begin position="169"/>
        <end position="189"/>
    </location>
</feature>
<feature type="topological domain" description="Cytoplasmic" evidence="2">
    <location>
        <begin position="190"/>
        <end position="228"/>
    </location>
</feature>
<feature type="transmembrane region" description="Helical" evidence="3">
    <location>
        <begin position="229"/>
        <end position="249"/>
    </location>
</feature>
<feature type="topological domain" description="Periplasmic" evidence="2">
    <location>
        <begin position="250"/>
        <end position="278"/>
    </location>
</feature>
<feature type="transmembrane region" description="Helical" evidence="3">
    <location>
        <begin position="279"/>
        <end position="299"/>
    </location>
</feature>
<feature type="topological domain" description="Cytoplasmic" evidence="2">
    <location>
        <begin position="300"/>
        <end position="306"/>
    </location>
</feature>
<feature type="domain" description="ABC transmembrane type-1" evidence="3">
    <location>
        <begin position="95"/>
        <end position="292"/>
    </location>
</feature>
<gene>
    <name evidence="1" type="primary">gsiC</name>
    <name type="ordered locus">SPA1905</name>
</gene>
<dbReference type="EMBL" id="CP000026">
    <property type="protein sequence ID" value="AAV77816.1"/>
    <property type="molecule type" value="Genomic_DNA"/>
</dbReference>
<dbReference type="RefSeq" id="WP_000936067.1">
    <property type="nucleotide sequence ID" value="NC_006511.1"/>
</dbReference>
<dbReference type="SMR" id="Q5PGP5"/>
<dbReference type="KEGG" id="spt:SPA1905"/>
<dbReference type="HOGENOM" id="CLU_036879_0_0_6"/>
<dbReference type="Proteomes" id="UP000008185">
    <property type="component" value="Chromosome"/>
</dbReference>
<dbReference type="GO" id="GO:0005886">
    <property type="term" value="C:plasma membrane"/>
    <property type="evidence" value="ECO:0007669"/>
    <property type="project" value="UniProtKB-SubCell"/>
</dbReference>
<dbReference type="GO" id="GO:0055085">
    <property type="term" value="P:transmembrane transport"/>
    <property type="evidence" value="ECO:0007669"/>
    <property type="project" value="InterPro"/>
</dbReference>
<dbReference type="CDD" id="cd06261">
    <property type="entry name" value="TM_PBP2"/>
    <property type="match status" value="1"/>
</dbReference>
<dbReference type="FunFam" id="1.10.3720.10:FF:000024">
    <property type="entry name" value="Glutathione ABC transporter permease GsiC"/>
    <property type="match status" value="1"/>
</dbReference>
<dbReference type="Gene3D" id="1.10.3720.10">
    <property type="entry name" value="MetI-like"/>
    <property type="match status" value="1"/>
</dbReference>
<dbReference type="InterPro" id="IPR045621">
    <property type="entry name" value="BPD_transp_1_N"/>
</dbReference>
<dbReference type="InterPro" id="IPR000515">
    <property type="entry name" value="MetI-like"/>
</dbReference>
<dbReference type="InterPro" id="IPR035906">
    <property type="entry name" value="MetI-like_sf"/>
</dbReference>
<dbReference type="NCBIfam" id="NF011661">
    <property type="entry name" value="PRK15081.1"/>
    <property type="match status" value="1"/>
</dbReference>
<dbReference type="PANTHER" id="PTHR43163">
    <property type="entry name" value="DIPEPTIDE TRANSPORT SYSTEM PERMEASE PROTEIN DPPB-RELATED"/>
    <property type="match status" value="1"/>
</dbReference>
<dbReference type="PANTHER" id="PTHR43163:SF5">
    <property type="entry name" value="GLUTATHIONE TRANSPORT SYSTEM PERMEASE PROTEIN GSIC"/>
    <property type="match status" value="1"/>
</dbReference>
<dbReference type="Pfam" id="PF00528">
    <property type="entry name" value="BPD_transp_1"/>
    <property type="match status" value="1"/>
</dbReference>
<dbReference type="Pfam" id="PF19300">
    <property type="entry name" value="BPD_transp_1_N"/>
    <property type="match status" value="1"/>
</dbReference>
<dbReference type="SUPFAM" id="SSF161098">
    <property type="entry name" value="MetI-like"/>
    <property type="match status" value="1"/>
</dbReference>
<dbReference type="PROSITE" id="PS50928">
    <property type="entry name" value="ABC_TM1"/>
    <property type="match status" value="1"/>
</dbReference>